<accession>E1BN97</accession>
<accession>Q29RJ8</accession>
<proteinExistence type="evidence at transcript level"/>
<dbReference type="EMBL" id="AAFC03033006">
    <property type="status" value="NOT_ANNOTATED_CDS"/>
    <property type="molecule type" value="Genomic_DNA"/>
</dbReference>
<dbReference type="EMBL" id="AAFC03033172">
    <property type="status" value="NOT_ANNOTATED_CDS"/>
    <property type="molecule type" value="Genomic_DNA"/>
</dbReference>
<dbReference type="EMBL" id="BC114141">
    <property type="protein sequence ID" value="AAI14142.1"/>
    <property type="molecule type" value="mRNA"/>
</dbReference>
<dbReference type="RefSeq" id="NP_001039665.1">
    <molecule id="E1BN97-1"/>
    <property type="nucleotide sequence ID" value="NM_001046200.2"/>
</dbReference>
<dbReference type="FunCoup" id="E1BN97">
    <property type="interactions" value="1431"/>
</dbReference>
<dbReference type="STRING" id="9913.ENSBTAP00000059069"/>
<dbReference type="PaxDb" id="9913-ENSBTAP00000023181"/>
<dbReference type="GeneID" id="515467"/>
<dbReference type="KEGG" id="bta:515467"/>
<dbReference type="CTD" id="65062"/>
<dbReference type="eggNOG" id="ENOG502QTW0">
    <property type="taxonomic scope" value="Eukaryota"/>
</dbReference>
<dbReference type="HOGENOM" id="CLU_061097_0_0_1"/>
<dbReference type="InParanoid" id="E1BN97"/>
<dbReference type="OrthoDB" id="550113at2759"/>
<dbReference type="TreeFam" id="TF329703"/>
<dbReference type="Proteomes" id="UP000009136">
    <property type="component" value="Unplaced"/>
</dbReference>
<dbReference type="GO" id="GO:0035869">
    <property type="term" value="C:ciliary transition zone"/>
    <property type="evidence" value="ECO:0000250"/>
    <property type="project" value="UniProtKB"/>
</dbReference>
<dbReference type="GO" id="GO:0016020">
    <property type="term" value="C:membrane"/>
    <property type="evidence" value="ECO:0007669"/>
    <property type="project" value="UniProtKB-SubCell"/>
</dbReference>
<dbReference type="GO" id="GO:0060271">
    <property type="term" value="P:cilium assembly"/>
    <property type="evidence" value="ECO:0000250"/>
    <property type="project" value="UniProtKB"/>
</dbReference>
<dbReference type="GO" id="GO:0030111">
    <property type="term" value="P:regulation of Wnt signaling pathway"/>
    <property type="evidence" value="ECO:0000250"/>
    <property type="project" value="UniProtKB"/>
</dbReference>
<dbReference type="InterPro" id="IPR029409">
    <property type="entry name" value="TMEM237"/>
</dbReference>
<dbReference type="PANTHER" id="PTHR28388">
    <property type="entry name" value="TRANSMEMBRANE PROTEIN 237"/>
    <property type="match status" value="1"/>
</dbReference>
<dbReference type="PANTHER" id="PTHR28388:SF1">
    <property type="entry name" value="TRANSMEMBRANE PROTEIN 237"/>
    <property type="match status" value="1"/>
</dbReference>
<dbReference type="Pfam" id="PF15383">
    <property type="entry name" value="TMEM237"/>
    <property type="match status" value="1"/>
</dbReference>
<evidence type="ECO:0000250" key="1"/>
<evidence type="ECO:0000250" key="2">
    <source>
        <dbReference type="UniProtKB" id="Q96Q45"/>
    </source>
</evidence>
<evidence type="ECO:0000255" key="3"/>
<evidence type="ECO:0000256" key="4">
    <source>
        <dbReference type="SAM" id="MobiDB-lite"/>
    </source>
</evidence>
<evidence type="ECO:0000305" key="5"/>
<reference key="1">
    <citation type="journal article" date="2009" name="Science">
        <title>The genome sequence of taurine cattle: a window to ruminant biology and evolution.</title>
        <authorList>
            <consortium name="The bovine genome sequencing and analysis consortium"/>
        </authorList>
    </citation>
    <scope>NUCLEOTIDE SEQUENCE [LARGE SCALE GENOMIC DNA]</scope>
    <source>
        <strain>Hereford</strain>
    </source>
</reference>
<reference key="2">
    <citation type="submission" date="2006-02" db="EMBL/GenBank/DDBJ databases">
        <authorList>
            <consortium name="NIH - Mammalian Gene Collection (MGC) project"/>
        </authorList>
    </citation>
    <scope>NUCLEOTIDE SEQUENCE [LARGE SCALE MRNA] (ISOFORM 1)</scope>
    <source>
        <strain>Hereford</strain>
        <tissue>Hypothalamus</tissue>
    </source>
</reference>
<gene>
    <name type="primary">TMEM237</name>
</gene>
<comment type="function">
    <text evidence="1">Component of the transition zone in primary cilia. Required for ciliogenesis (By similarity).</text>
</comment>
<comment type="subunit">
    <text evidence="2">Part of the tectonic-like complex (also named B9 complex). Interacts with TMEM107.</text>
</comment>
<comment type="subcellular location">
    <subcellularLocation>
        <location evidence="5">Membrane</location>
        <topology evidence="5">Multi-pass membrane protein</topology>
    </subcellularLocation>
    <subcellularLocation>
        <location evidence="1">Cell projection</location>
        <location evidence="1">Cilium</location>
    </subcellularLocation>
    <text evidence="1">Localizes at the proximal region of primary cilia were observed, consistent with localization to the transition zone. Anchored to the transition zone by RPGRIP1L (By similarity).</text>
</comment>
<comment type="alternative products">
    <event type="alternative splicing"/>
    <isoform>
        <id>E1BN97-1</id>
        <name>1</name>
        <sequence type="displayed"/>
    </isoform>
    <isoform>
        <id>E1BN97-2</id>
        <name>2</name>
        <sequence type="described" ref="VSP_042404 VSP_042405"/>
    </isoform>
</comment>
<comment type="similarity">
    <text evidence="5">Belongs to the TMEM237 family.</text>
</comment>
<feature type="chain" id="PRO_0000415829" description="Transmembrane protein 237">
    <location>
        <begin position="1"/>
        <end position="400"/>
    </location>
</feature>
<feature type="transmembrane region" description="Helical" evidence="3">
    <location>
        <begin position="221"/>
        <end position="241"/>
    </location>
</feature>
<feature type="transmembrane region" description="Helical" evidence="3">
    <location>
        <begin position="262"/>
        <end position="282"/>
    </location>
</feature>
<feature type="transmembrane region" description="Helical" evidence="3">
    <location>
        <begin position="297"/>
        <end position="317"/>
    </location>
</feature>
<feature type="transmembrane region" description="Helical" evidence="3">
    <location>
        <begin position="352"/>
        <end position="372"/>
    </location>
</feature>
<feature type="region of interest" description="Disordered" evidence="4">
    <location>
        <begin position="1"/>
        <end position="112"/>
    </location>
</feature>
<feature type="compositionally biased region" description="Basic and acidic residues" evidence="4">
    <location>
        <begin position="54"/>
        <end position="71"/>
    </location>
</feature>
<feature type="compositionally biased region" description="Low complexity" evidence="4">
    <location>
        <begin position="84"/>
        <end position="96"/>
    </location>
</feature>
<feature type="compositionally biased region" description="Polar residues" evidence="4">
    <location>
        <begin position="97"/>
        <end position="107"/>
    </location>
</feature>
<feature type="modified residue" description="Phosphoserine" evidence="2">
    <location>
        <position position="17"/>
    </location>
</feature>
<feature type="modified residue" description="Phosphoserine" evidence="2">
    <location>
        <position position="43"/>
    </location>
</feature>
<feature type="splice variant" id="VSP_042404" description="In isoform 2." evidence="5">
    <original>M</original>
    <variation>MTHCACARGSEAAGCELPAPGSRQPPESQALDAM</variation>
    <location>
        <position position="1"/>
    </location>
</feature>
<feature type="splice variant" id="VSP_042405" description="In isoform 2." evidence="5">
    <original>SAIQ</original>
    <variation>R</variation>
    <location>
        <begin position="17"/>
        <end position="20"/>
    </location>
</feature>
<protein>
    <recommendedName>
        <fullName>Transmembrane protein 237</fullName>
    </recommendedName>
</protein>
<organism>
    <name type="scientific">Bos taurus</name>
    <name type="common">Bovine</name>
    <dbReference type="NCBI Taxonomy" id="9913"/>
    <lineage>
        <taxon>Eukaryota</taxon>
        <taxon>Metazoa</taxon>
        <taxon>Chordata</taxon>
        <taxon>Craniata</taxon>
        <taxon>Vertebrata</taxon>
        <taxon>Euteleostomi</taxon>
        <taxon>Mammalia</taxon>
        <taxon>Eutheria</taxon>
        <taxon>Laurasiatheria</taxon>
        <taxon>Artiodactyla</taxon>
        <taxon>Ruminantia</taxon>
        <taxon>Pecora</taxon>
        <taxon>Bovidae</taxon>
        <taxon>Bovinae</taxon>
        <taxon>Bos</taxon>
    </lineage>
</organism>
<sequence length="400" mass="44562">MGKKQVRPPRALPPVPSAIQDDIPLSRPKKKKPRTKTPLASASSEGLVQTAVHRPPEGSEPPTKDSIEHQEAPVQRRQKKTRLPLELETTLTQKKTASPSLLPNENGINVEPDEEPVIQKPRRKTKKTQPAELHYANELGVEDEDIITDEQSSPEQQSVFTAPTGISQPVGKVFVEKSRRFQAADRAELIKTTEKIDVSMDMKPSWTTRDVALSVHRAFRMIGVFSHGFLAGCAVWNIVVIYVLAGDELSDLSNLLQQYKTLAYPFQSLLYLLLALSTVSAFDRIDFAKTSVAIRNFLALDPRALASFLYFTALVLSLSQQMTSDRIHLYTPSSVNGSLWAEGIEEQVLQPWIVVNLVVAVLVGLSWLFLSYRPGMDLSEELMFSSDVEEYPDKGIKVSS</sequence>
<keyword id="KW-0025">Alternative splicing</keyword>
<keyword id="KW-0966">Cell projection</keyword>
<keyword id="KW-0969">Cilium</keyword>
<keyword id="KW-0970">Cilium biogenesis/degradation</keyword>
<keyword id="KW-0472">Membrane</keyword>
<keyword id="KW-0597">Phosphoprotein</keyword>
<keyword id="KW-1185">Reference proteome</keyword>
<keyword id="KW-0812">Transmembrane</keyword>
<keyword id="KW-1133">Transmembrane helix</keyword>
<name>TM237_BOVIN</name>